<reference key="1">
    <citation type="submission" date="1996-12" db="EMBL/GenBank/DDBJ databases">
        <authorList>
            <person name="Tweedie S."/>
            <person name="Charlton J."/>
            <person name="Clark V."/>
            <person name="Bird A."/>
        </authorList>
    </citation>
    <scope>NUCLEOTIDE SEQUENCE [GENOMIC DNA]</scope>
</reference>
<protein>
    <recommendedName>
        <fullName evidence="3">Large ribosomal subunit protein P2</fullName>
    </recommendedName>
    <alternativeName>
        <fullName>60S acidic ribosomal protein P2</fullName>
    </alternativeName>
</protein>
<name>RLA2_BRAFL</name>
<dbReference type="EMBL" id="Z83263">
    <property type="protein sequence ID" value="CAB05855.1"/>
    <property type="molecule type" value="Genomic_DNA"/>
</dbReference>
<dbReference type="SMR" id="O01725"/>
<dbReference type="eggNOG" id="KOG3449">
    <property type="taxonomic scope" value="Eukaryota"/>
</dbReference>
<dbReference type="Proteomes" id="UP000001554">
    <property type="component" value="Unplaced"/>
</dbReference>
<dbReference type="GO" id="GO:0022625">
    <property type="term" value="C:cytosolic large ribosomal subunit"/>
    <property type="evidence" value="ECO:0007669"/>
    <property type="project" value="InterPro"/>
</dbReference>
<dbReference type="GO" id="GO:0003735">
    <property type="term" value="F:structural constituent of ribosome"/>
    <property type="evidence" value="ECO:0007669"/>
    <property type="project" value="InterPro"/>
</dbReference>
<dbReference type="GO" id="GO:0002182">
    <property type="term" value="P:cytoplasmic translational elongation"/>
    <property type="evidence" value="ECO:0007669"/>
    <property type="project" value="InterPro"/>
</dbReference>
<dbReference type="CDD" id="cd05833">
    <property type="entry name" value="Ribosomal_P2"/>
    <property type="match status" value="1"/>
</dbReference>
<dbReference type="FunFam" id="1.10.10.1410:FF:000002">
    <property type="entry name" value="60S acidic ribosomal protein P2"/>
    <property type="match status" value="1"/>
</dbReference>
<dbReference type="Gene3D" id="1.10.10.1410">
    <property type="match status" value="1"/>
</dbReference>
<dbReference type="HAMAP" id="MF_01478">
    <property type="entry name" value="Ribosomal_L12_arch"/>
    <property type="match status" value="1"/>
</dbReference>
<dbReference type="InterPro" id="IPR038716">
    <property type="entry name" value="P1/P2_N_sf"/>
</dbReference>
<dbReference type="InterPro" id="IPR027534">
    <property type="entry name" value="Ribosomal_P1/P2"/>
</dbReference>
<dbReference type="InterPro" id="IPR044076">
    <property type="entry name" value="Ribosomal_P2"/>
</dbReference>
<dbReference type="PANTHER" id="PTHR21141">
    <property type="entry name" value="60S ACIDIC RIBOSOMAL PROTEIN FAMILY MEMBER"/>
    <property type="match status" value="1"/>
</dbReference>
<dbReference type="PANTHER" id="PTHR21141:SF5">
    <property type="entry name" value="LARGE RIBOSOMAL SUBUNIT PROTEIN P2"/>
    <property type="match status" value="1"/>
</dbReference>
<dbReference type="Pfam" id="PF00428">
    <property type="entry name" value="Ribosomal_60s"/>
    <property type="match status" value="1"/>
</dbReference>
<feature type="chain" id="PRO_0000157647" description="Large ribosomal subunit protein P2">
    <location>
        <begin position="1"/>
        <end position="116"/>
    </location>
</feature>
<feature type="region of interest" description="Disordered" evidence="2">
    <location>
        <begin position="60"/>
        <end position="116"/>
    </location>
</feature>
<feature type="compositionally biased region" description="Gly residues" evidence="2">
    <location>
        <begin position="67"/>
        <end position="87"/>
    </location>
</feature>
<feature type="compositionally biased region" description="Basic and acidic residues" evidence="2">
    <location>
        <begin position="91"/>
        <end position="101"/>
    </location>
</feature>
<evidence type="ECO:0000250" key="1"/>
<evidence type="ECO:0000256" key="2">
    <source>
        <dbReference type="SAM" id="MobiDB-lite"/>
    </source>
</evidence>
<evidence type="ECO:0000305" key="3"/>
<comment type="function">
    <text>Plays an important role in the elongation step of protein synthesis.</text>
</comment>
<comment type="subunit">
    <text>P1 and P2 exist as dimers at the large ribosomal subunit.</text>
</comment>
<comment type="PTM">
    <text evidence="1">Phosphorylated.</text>
</comment>
<comment type="similarity">
    <text evidence="3">Belongs to the eukaryotic ribosomal protein P1/P2 family.</text>
</comment>
<organism>
    <name type="scientific">Branchiostoma floridae</name>
    <name type="common">Florida lancelet</name>
    <name type="synonym">Amphioxus</name>
    <dbReference type="NCBI Taxonomy" id="7739"/>
    <lineage>
        <taxon>Eukaryota</taxon>
        <taxon>Metazoa</taxon>
        <taxon>Chordata</taxon>
        <taxon>Cephalochordata</taxon>
        <taxon>Leptocardii</taxon>
        <taxon>Amphioxiformes</taxon>
        <taxon>Branchiostomatidae</taxon>
        <taxon>Branchiostoma</taxon>
    </lineage>
</organism>
<sequence length="116" mass="11557">MRYVAAYLLAVLGGNANPSAGDIKKILGSVGIDAEDERLNKVIGELKGKDIEEVMAAGRGKLSSMPSGGGVAAAAGGGGAAAGGGGAAPAAEEKKEEKKEESEEESDDDMGFGLFD</sequence>
<accession>O01725</accession>
<proteinExistence type="inferred from homology"/>
<keyword id="KW-0597">Phosphoprotein</keyword>
<keyword id="KW-1185">Reference proteome</keyword>
<keyword id="KW-0687">Ribonucleoprotein</keyword>
<keyword id="KW-0689">Ribosomal protein</keyword>